<reference evidence="9" key="1">
    <citation type="journal article" date="2004" name="Nature">
        <title>Genome evolution in yeasts.</title>
        <authorList>
            <person name="Dujon B."/>
            <person name="Sherman D."/>
            <person name="Fischer G."/>
            <person name="Durrens P."/>
            <person name="Casaregola S."/>
            <person name="Lafontaine I."/>
            <person name="de Montigny J."/>
            <person name="Marck C."/>
            <person name="Neuveglise C."/>
            <person name="Talla E."/>
            <person name="Goffard N."/>
            <person name="Frangeul L."/>
            <person name="Aigle M."/>
            <person name="Anthouard V."/>
            <person name="Babour A."/>
            <person name="Barbe V."/>
            <person name="Barnay S."/>
            <person name="Blanchin S."/>
            <person name="Beckerich J.-M."/>
            <person name="Beyne E."/>
            <person name="Bleykasten C."/>
            <person name="Boisrame A."/>
            <person name="Boyer J."/>
            <person name="Cattolico L."/>
            <person name="Confanioleri F."/>
            <person name="de Daruvar A."/>
            <person name="Despons L."/>
            <person name="Fabre E."/>
            <person name="Fairhead C."/>
            <person name="Ferry-Dumazet H."/>
            <person name="Groppi A."/>
            <person name="Hantraye F."/>
            <person name="Hennequin C."/>
            <person name="Jauniaux N."/>
            <person name="Joyet P."/>
            <person name="Kachouri R."/>
            <person name="Kerrest A."/>
            <person name="Koszul R."/>
            <person name="Lemaire M."/>
            <person name="Lesur I."/>
            <person name="Ma L."/>
            <person name="Muller H."/>
            <person name="Nicaud J.-M."/>
            <person name="Nikolski M."/>
            <person name="Oztas S."/>
            <person name="Ozier-Kalogeropoulos O."/>
            <person name="Pellenz S."/>
            <person name="Potier S."/>
            <person name="Richard G.-F."/>
            <person name="Straub M.-L."/>
            <person name="Suleau A."/>
            <person name="Swennen D."/>
            <person name="Tekaia F."/>
            <person name="Wesolowski-Louvel M."/>
            <person name="Westhof E."/>
            <person name="Wirth B."/>
            <person name="Zeniou-Meyer M."/>
            <person name="Zivanovic Y."/>
            <person name="Bolotin-Fukuhara M."/>
            <person name="Thierry A."/>
            <person name="Bouchier C."/>
            <person name="Caudron B."/>
            <person name="Scarpelli C."/>
            <person name="Gaillardin C."/>
            <person name="Weissenbach J."/>
            <person name="Wincker P."/>
            <person name="Souciet J.-L."/>
        </authorList>
    </citation>
    <scope>NUCLEOTIDE SEQUENCE [LARGE SCALE GENOMIC DNA]</scope>
    <source>
        <strain evidence="9">CLIB 122 / E 150</strain>
    </source>
</reference>
<reference evidence="6" key="2">
    <citation type="journal article" date="2020" name="FEMS Yeast Res.">
        <title>Identification of the citrate exporter Cex1 of Yarrowia lipolytica.</title>
        <authorList>
            <person name="Erian A.M."/>
            <person name="Egermeier M."/>
            <person name="Rassinger A."/>
            <person name="Marx H."/>
            <person name="Sauer M."/>
        </authorList>
    </citation>
    <scope>FUNCTION</scope>
    <scope>SUBCELLULAR LOCATION</scope>
    <scope>DISRUPTION PHENOTYPE</scope>
    <source>
        <strain>DSM 3286</strain>
    </source>
</reference>
<organism evidence="9">
    <name type="scientific">Yarrowia lipolytica (strain CLIB 122 / E 150)</name>
    <name type="common">Yeast</name>
    <name type="synonym">Candida lipolytica</name>
    <dbReference type="NCBI Taxonomy" id="284591"/>
    <lineage>
        <taxon>Eukaryota</taxon>
        <taxon>Fungi</taxon>
        <taxon>Dikarya</taxon>
        <taxon>Ascomycota</taxon>
        <taxon>Saccharomycotina</taxon>
        <taxon>Dipodascomycetes</taxon>
        <taxon>Dipodascales</taxon>
        <taxon>Dipodascales incertae sedis</taxon>
        <taxon>Yarrowia</taxon>
    </lineage>
</organism>
<protein>
    <recommendedName>
        <fullName evidence="5">Citrate exporter 1</fullName>
    </recommendedName>
</protein>
<sequence>MFNLNTKSSKEPEVTEVAVDSTPSSPVTRESSPESSPDNSAVDLEKGKKSKFEMHDQTNLLPRSQLFLVFGAMAFCMLVSFMDQNGISVALPDIAKDLNATDTISWAGTSGLIANTVFQVLYGRLSDIFGRKLVFMIVVCTLVCADIGCACAQTSTQLYIFRAFSGIANGGMSCLTMIVVSDIVTLKERGKYQGILGACVGLGNTIGPFLGAAFTENVSWRAIFYLLAPMGGLCAVVIFFILPSKKPQGSAIQKAKAIDYPGLFCSSVALVFLLVPIAGGGSYYEWDSPMVISMLCIGGVFFIAFFVIEGFFAKLPMMPLRIFGTKALFALMMHSVLLGIAYYGDLYYLPMYMRNIRGWSSMKAAGMSCALVTTQAVTTVISGQYLSRMGRYLEVIYFGFGIWTVGAIMKCFWKRDSNMALLIFSLLFEGAGVGCCFQPTLVAAQALSRKEDRSVVISSRNFLRSFGGAVGLAVCSAILANSLKADLKTKNLPSELYELIVKAPFSLPDLSHYPEYRDQVLDAYMNGSHTVFVFLCPIVGACLLVTVFVKDHGLQTHEKKAAEAKTVEDKDKDESGTDCEDMTKGEVLVSEKEGKLSRNSSSQSMHFGDHTAVNTPAPTGYNTPVVGTLCHNSPNFPPMDHNDVITPLEDFDESPLPPHSPNSSGKRVTIQEE</sequence>
<accession>Q6C8F0</accession>
<evidence type="ECO:0000255" key="1"/>
<evidence type="ECO:0000255" key="2">
    <source>
        <dbReference type="PROSITE-ProRule" id="PRU00498"/>
    </source>
</evidence>
<evidence type="ECO:0000256" key="3">
    <source>
        <dbReference type="SAM" id="MobiDB-lite"/>
    </source>
</evidence>
<evidence type="ECO:0000269" key="4">
    <source>
    </source>
</evidence>
<evidence type="ECO:0000303" key="5">
    <source>
    </source>
</evidence>
<evidence type="ECO:0000305" key="6"/>
<evidence type="ECO:0000305" key="7">
    <source>
    </source>
</evidence>
<evidence type="ECO:0000312" key="8">
    <source>
        <dbReference type="EMBL" id="CAG81254.1"/>
    </source>
</evidence>
<evidence type="ECO:0000312" key="9">
    <source>
        <dbReference type="Proteomes" id="UP000001300"/>
    </source>
</evidence>
<gene>
    <name evidence="5" type="primary">CEX1</name>
    <name evidence="8" type="ORF">YALI0_D20196g</name>
</gene>
<proteinExistence type="inferred from homology"/>
<name>CEX1_YARLI</name>
<comment type="function">
    <text evidence="4">Transmembrane transporter that exports citrate across the cell membrane.</text>
</comment>
<comment type="catalytic activity">
    <reaction evidence="7">
        <text>citrate(in) = citrate(out)</text>
        <dbReference type="Rhea" id="RHEA:33183"/>
        <dbReference type="ChEBI" id="CHEBI:16947"/>
    </reaction>
</comment>
<comment type="subcellular location">
    <subcellularLocation>
        <location evidence="4">Cell membrane</location>
        <topology evidence="1">Multi-pass membrane protein</topology>
    </subcellularLocation>
</comment>
<comment type="disruption phenotype">
    <text evidence="4">Abolishes citrate export.</text>
</comment>
<comment type="similarity">
    <text evidence="6">Belongs to the major facilitator superfamily.</text>
</comment>
<dbReference type="EMBL" id="CR382130">
    <property type="protein sequence ID" value="CAG81254.1"/>
    <property type="molecule type" value="Genomic_DNA"/>
</dbReference>
<dbReference type="RefSeq" id="XP_503062.1">
    <property type="nucleotide sequence ID" value="XM_503062.1"/>
</dbReference>
<dbReference type="SMR" id="Q6C8F0"/>
<dbReference type="GlyCosmos" id="Q6C8F0">
    <property type="glycosylation" value="5 sites, No reported glycans"/>
</dbReference>
<dbReference type="EnsemblFungi" id="CAG81254">
    <property type="protein sequence ID" value="CAG81254"/>
    <property type="gene ID" value="YALI0_D20196g"/>
</dbReference>
<dbReference type="KEGG" id="yli:2911201"/>
<dbReference type="VEuPathDB" id="FungiDB:YALI0_D20196g"/>
<dbReference type="HOGENOM" id="CLU_000960_22_0_1"/>
<dbReference type="InParanoid" id="Q6C8F0"/>
<dbReference type="OMA" id="YSHLYYL"/>
<dbReference type="OrthoDB" id="124007at4891"/>
<dbReference type="Proteomes" id="UP000001300">
    <property type="component" value="Chromosome D"/>
</dbReference>
<dbReference type="GO" id="GO:0005886">
    <property type="term" value="C:plasma membrane"/>
    <property type="evidence" value="ECO:0000314"/>
    <property type="project" value="UniProtKB"/>
</dbReference>
<dbReference type="GO" id="GO:0015137">
    <property type="term" value="F:citrate transmembrane transporter activity"/>
    <property type="evidence" value="ECO:0000315"/>
    <property type="project" value="UniProtKB"/>
</dbReference>
<dbReference type="GO" id="GO:0022857">
    <property type="term" value="F:transmembrane transporter activity"/>
    <property type="evidence" value="ECO:0000318"/>
    <property type="project" value="GO_Central"/>
</dbReference>
<dbReference type="GO" id="GO:0015746">
    <property type="term" value="P:citrate transport"/>
    <property type="evidence" value="ECO:0000315"/>
    <property type="project" value="UniProtKB"/>
</dbReference>
<dbReference type="GO" id="GO:0140115">
    <property type="term" value="P:export across plasma membrane"/>
    <property type="evidence" value="ECO:0000315"/>
    <property type="project" value="UniProtKB"/>
</dbReference>
<dbReference type="GO" id="GO:0055085">
    <property type="term" value="P:transmembrane transport"/>
    <property type="evidence" value="ECO:0000318"/>
    <property type="project" value="GO_Central"/>
</dbReference>
<dbReference type="FunFam" id="1.20.1250.20:FF:000436">
    <property type="entry name" value="MFS transporter, putative"/>
    <property type="match status" value="1"/>
</dbReference>
<dbReference type="FunFam" id="1.20.1720.10:FF:000013">
    <property type="entry name" value="Related to multidrug resistance proteins"/>
    <property type="match status" value="1"/>
</dbReference>
<dbReference type="Gene3D" id="1.20.1250.20">
    <property type="entry name" value="MFS general substrate transporter like domains"/>
    <property type="match status" value="2"/>
</dbReference>
<dbReference type="InterPro" id="IPR011701">
    <property type="entry name" value="MFS"/>
</dbReference>
<dbReference type="InterPro" id="IPR020846">
    <property type="entry name" value="MFS_dom"/>
</dbReference>
<dbReference type="InterPro" id="IPR036259">
    <property type="entry name" value="MFS_trans_sf"/>
</dbReference>
<dbReference type="PANTHER" id="PTHR23501">
    <property type="entry name" value="MAJOR FACILITATOR SUPERFAMILY"/>
    <property type="match status" value="1"/>
</dbReference>
<dbReference type="PANTHER" id="PTHR23501:SF78">
    <property type="entry name" value="MAJOR FACILITATOR SUPERFAMILY (MFS) PROFILE DOMAIN-CONTAINING PROTEIN-RELATED"/>
    <property type="match status" value="1"/>
</dbReference>
<dbReference type="Pfam" id="PF07690">
    <property type="entry name" value="MFS_1"/>
    <property type="match status" value="1"/>
</dbReference>
<dbReference type="PRINTS" id="PR01036">
    <property type="entry name" value="TCRTETB"/>
</dbReference>
<dbReference type="SUPFAM" id="SSF103473">
    <property type="entry name" value="MFS general substrate transporter"/>
    <property type="match status" value="1"/>
</dbReference>
<dbReference type="PROSITE" id="PS50850">
    <property type="entry name" value="MFS"/>
    <property type="match status" value="1"/>
</dbReference>
<feature type="chain" id="PRO_0000452024" description="Citrate exporter 1">
    <location>
        <begin position="1"/>
        <end position="673"/>
    </location>
</feature>
<feature type="transmembrane region" description="Helical" evidence="1">
    <location>
        <begin position="67"/>
        <end position="87"/>
    </location>
</feature>
<feature type="transmembrane region" description="Helical" evidence="1">
    <location>
        <begin position="103"/>
        <end position="123"/>
    </location>
</feature>
<feature type="transmembrane region" description="Helical" evidence="1">
    <location>
        <begin position="133"/>
        <end position="153"/>
    </location>
</feature>
<feature type="transmembrane region" description="Helical" evidence="1">
    <location>
        <begin position="164"/>
        <end position="184"/>
    </location>
</feature>
<feature type="transmembrane region" description="Helical" evidence="1">
    <location>
        <begin position="194"/>
        <end position="214"/>
    </location>
</feature>
<feature type="transmembrane region" description="Helical" evidence="1">
    <location>
        <begin position="222"/>
        <end position="242"/>
    </location>
</feature>
<feature type="transmembrane region" description="Helical" evidence="1">
    <location>
        <begin position="261"/>
        <end position="281"/>
    </location>
</feature>
<feature type="transmembrane region" description="Helical" evidence="1">
    <location>
        <begin position="292"/>
        <end position="312"/>
    </location>
</feature>
<feature type="transmembrane region" description="Helical" evidence="1">
    <location>
        <begin position="322"/>
        <end position="342"/>
    </location>
</feature>
<feature type="transmembrane region" description="Helical" evidence="1">
    <location>
        <begin position="364"/>
        <end position="384"/>
    </location>
</feature>
<feature type="transmembrane region" description="Helical" evidence="1">
    <location>
        <begin position="393"/>
        <end position="413"/>
    </location>
</feature>
<feature type="transmembrane region" description="Helical" evidence="1">
    <location>
        <begin position="419"/>
        <end position="439"/>
    </location>
</feature>
<feature type="transmembrane region" description="Helical" evidence="1">
    <location>
        <begin position="465"/>
        <end position="485"/>
    </location>
</feature>
<feature type="transmembrane region" description="Helical" evidence="1">
    <location>
        <begin position="529"/>
        <end position="549"/>
    </location>
</feature>
<feature type="region of interest" description="Disordered" evidence="3">
    <location>
        <begin position="1"/>
        <end position="44"/>
    </location>
</feature>
<feature type="region of interest" description="Disordered" evidence="3">
    <location>
        <begin position="564"/>
        <end position="608"/>
    </location>
</feature>
<feature type="region of interest" description="Disordered" evidence="3">
    <location>
        <begin position="636"/>
        <end position="673"/>
    </location>
</feature>
<feature type="compositionally biased region" description="Polar residues" evidence="3">
    <location>
        <begin position="21"/>
        <end position="39"/>
    </location>
</feature>
<feature type="compositionally biased region" description="Basic and acidic residues" evidence="3">
    <location>
        <begin position="564"/>
        <end position="596"/>
    </location>
</feature>
<feature type="glycosylation site" description="N-linked (GlcNAc...) asparagine" evidence="2">
    <location>
        <position position="99"/>
    </location>
</feature>
<feature type="glycosylation site" description="N-linked (GlcNAc...) asparagine" evidence="2">
    <location>
        <position position="217"/>
    </location>
</feature>
<feature type="glycosylation site" description="N-linked (GlcNAc...) asparagine" evidence="2">
    <location>
        <position position="526"/>
    </location>
</feature>
<feature type="glycosylation site" description="N-linked (GlcNAc...) asparagine" evidence="2">
    <location>
        <position position="599"/>
    </location>
</feature>
<feature type="glycosylation site" description="N-linked (GlcNAc...) asparagine" evidence="2">
    <location>
        <position position="662"/>
    </location>
</feature>
<keyword id="KW-1003">Cell membrane</keyword>
<keyword id="KW-0325">Glycoprotein</keyword>
<keyword id="KW-0472">Membrane</keyword>
<keyword id="KW-1185">Reference proteome</keyword>
<keyword id="KW-0812">Transmembrane</keyword>
<keyword id="KW-1133">Transmembrane helix</keyword>
<keyword id="KW-0813">Transport</keyword>